<dbReference type="EC" id="3.4.21.-"/>
<dbReference type="EMBL" id="AF395781">
    <property type="protein sequence ID" value="AAQ02911.1"/>
    <property type="molecule type" value="mRNA"/>
</dbReference>
<dbReference type="SMR" id="Q71QH6"/>
<dbReference type="MEROPS" id="S01.497"/>
<dbReference type="GO" id="GO:0005576">
    <property type="term" value="C:extracellular region"/>
    <property type="evidence" value="ECO:0007669"/>
    <property type="project" value="UniProtKB-SubCell"/>
</dbReference>
<dbReference type="GO" id="GO:0030141">
    <property type="term" value="C:secretory granule"/>
    <property type="evidence" value="ECO:0007669"/>
    <property type="project" value="TreeGrafter"/>
</dbReference>
<dbReference type="GO" id="GO:0004252">
    <property type="term" value="F:serine-type endopeptidase activity"/>
    <property type="evidence" value="ECO:0007669"/>
    <property type="project" value="InterPro"/>
</dbReference>
<dbReference type="GO" id="GO:0090729">
    <property type="term" value="F:toxin activity"/>
    <property type="evidence" value="ECO:0007669"/>
    <property type="project" value="UniProtKB-KW"/>
</dbReference>
<dbReference type="GO" id="GO:0006508">
    <property type="term" value="P:proteolysis"/>
    <property type="evidence" value="ECO:0007669"/>
    <property type="project" value="UniProtKB-KW"/>
</dbReference>
<dbReference type="CDD" id="cd00190">
    <property type="entry name" value="Tryp_SPc"/>
    <property type="match status" value="1"/>
</dbReference>
<dbReference type="FunFam" id="2.40.10.10:FF:000158">
    <property type="entry name" value="Thrombin-like enzyme saxthrombin"/>
    <property type="match status" value="1"/>
</dbReference>
<dbReference type="FunFam" id="2.40.10.10:FF:000153">
    <property type="entry name" value="Venom plasminogen activator TSV-PA"/>
    <property type="match status" value="1"/>
</dbReference>
<dbReference type="Gene3D" id="2.40.10.10">
    <property type="entry name" value="Trypsin-like serine proteases"/>
    <property type="match status" value="2"/>
</dbReference>
<dbReference type="InterPro" id="IPR009003">
    <property type="entry name" value="Peptidase_S1_PA"/>
</dbReference>
<dbReference type="InterPro" id="IPR043504">
    <property type="entry name" value="Peptidase_S1_PA_chymotrypsin"/>
</dbReference>
<dbReference type="InterPro" id="IPR001314">
    <property type="entry name" value="Peptidase_S1A"/>
</dbReference>
<dbReference type="InterPro" id="IPR001254">
    <property type="entry name" value="Trypsin_dom"/>
</dbReference>
<dbReference type="InterPro" id="IPR018114">
    <property type="entry name" value="TRYPSIN_HIS"/>
</dbReference>
<dbReference type="InterPro" id="IPR033116">
    <property type="entry name" value="TRYPSIN_SER"/>
</dbReference>
<dbReference type="PANTHER" id="PTHR24271:SF47">
    <property type="entry name" value="KALLIKREIN-1"/>
    <property type="match status" value="1"/>
</dbReference>
<dbReference type="PANTHER" id="PTHR24271">
    <property type="entry name" value="KALLIKREIN-RELATED"/>
    <property type="match status" value="1"/>
</dbReference>
<dbReference type="Pfam" id="PF00089">
    <property type="entry name" value="Trypsin"/>
    <property type="match status" value="1"/>
</dbReference>
<dbReference type="PRINTS" id="PR00722">
    <property type="entry name" value="CHYMOTRYPSIN"/>
</dbReference>
<dbReference type="SMART" id="SM00020">
    <property type="entry name" value="Tryp_SPc"/>
    <property type="match status" value="1"/>
</dbReference>
<dbReference type="SUPFAM" id="SSF50494">
    <property type="entry name" value="Trypsin-like serine proteases"/>
    <property type="match status" value="1"/>
</dbReference>
<dbReference type="PROSITE" id="PS50240">
    <property type="entry name" value="TRYPSIN_DOM"/>
    <property type="match status" value="1"/>
</dbReference>
<dbReference type="PROSITE" id="PS00134">
    <property type="entry name" value="TRYPSIN_HIS"/>
    <property type="match status" value="1"/>
</dbReference>
<dbReference type="PROSITE" id="PS00135">
    <property type="entry name" value="TRYPSIN_SER"/>
    <property type="match status" value="1"/>
</dbReference>
<name>VSP13_TRIST</name>
<reference key="1">
    <citation type="submission" date="2001-06" db="EMBL/GenBank/DDBJ databases">
        <title>Identification of geographic variations and cloning of venom proteins of Trimeresurus stejnegeri: serine proteases and phospholipases.</title>
        <authorList>
            <person name="Tsai I.-H."/>
            <person name="Wang Y.-M."/>
        </authorList>
    </citation>
    <scope>NUCLEOTIDE SEQUENCE [MRNA]</scope>
    <source>
        <tissue>Venom gland</tissue>
    </source>
</reference>
<organism>
    <name type="scientific">Trimeresurus stejnegeri</name>
    <name type="common">Chinese green tree viper</name>
    <name type="synonym">Viridovipera stejnegeri</name>
    <dbReference type="NCBI Taxonomy" id="39682"/>
    <lineage>
        <taxon>Eukaryota</taxon>
        <taxon>Metazoa</taxon>
        <taxon>Chordata</taxon>
        <taxon>Craniata</taxon>
        <taxon>Vertebrata</taxon>
        <taxon>Euteleostomi</taxon>
        <taxon>Lepidosauria</taxon>
        <taxon>Squamata</taxon>
        <taxon>Bifurcata</taxon>
        <taxon>Unidentata</taxon>
        <taxon>Episquamata</taxon>
        <taxon>Toxicofera</taxon>
        <taxon>Serpentes</taxon>
        <taxon>Colubroidea</taxon>
        <taxon>Viperidae</taxon>
        <taxon>Crotalinae</taxon>
        <taxon>Trimeresurus</taxon>
    </lineage>
</organism>
<accession>Q71QH6</accession>
<proteinExistence type="evidence at transcript level"/>
<evidence type="ECO:0000250" key="1"/>
<evidence type="ECO:0000255" key="2"/>
<evidence type="ECO:0000255" key="3">
    <source>
        <dbReference type="PROSITE-ProRule" id="PRU00274"/>
    </source>
</evidence>
<protein>
    <recommendedName>
        <fullName>Snake venom serine protease KN13</fullName>
        <shortName>SVSP</shortName>
        <ecNumber>3.4.21.-</ecNumber>
    </recommendedName>
</protein>
<feature type="signal peptide" evidence="2">
    <location>
        <begin position="1"/>
        <end position="18"/>
    </location>
</feature>
<feature type="propeptide" id="PRO_0000295837" evidence="1">
    <location>
        <begin position="19"/>
        <end position="24"/>
    </location>
</feature>
<feature type="chain" id="PRO_5000061233" description="Snake venom serine protease KN13">
    <location>
        <begin position="25"/>
        <end position="258"/>
    </location>
</feature>
<feature type="domain" description="Peptidase S1" evidence="3">
    <location>
        <begin position="25"/>
        <end position="249"/>
    </location>
</feature>
<feature type="active site" description="Charge relay system" evidence="1">
    <location>
        <position position="65"/>
    </location>
</feature>
<feature type="active site" description="Charge relay system" evidence="1">
    <location>
        <position position="110"/>
    </location>
</feature>
<feature type="active site" description="Charge relay system" evidence="1">
    <location>
        <position position="204"/>
    </location>
</feature>
<feature type="glycosylation site" description="N-linked (GlcNAc...) asparagine" evidence="2">
    <location>
        <position position="103"/>
    </location>
</feature>
<feature type="glycosylation site" description="N-linked (GlcNAc...) asparagine" evidence="2">
    <location>
        <position position="121"/>
    </location>
</feature>
<feature type="glycosylation site" description="N-linked (GlcNAc...) asparagine" evidence="2">
    <location>
        <position position="122"/>
    </location>
</feature>
<feature type="glycosylation site" description="N-linked (GlcNAc...) asparagine" evidence="2">
    <location>
        <position position="154"/>
    </location>
</feature>
<feature type="glycosylation site" description="N-linked (GlcNAc...) asparagine" evidence="2">
    <location>
        <position position="170"/>
    </location>
</feature>
<feature type="glycosylation site" description="N-linked (GlcNAc...) asparagine" evidence="2">
    <location>
        <position position="251"/>
    </location>
</feature>
<feature type="disulfide bond" evidence="3">
    <location>
        <begin position="31"/>
        <end position="163"/>
    </location>
</feature>
<feature type="disulfide bond" evidence="3">
    <location>
        <begin position="50"/>
        <end position="66"/>
    </location>
</feature>
<feature type="disulfide bond" evidence="3">
    <location>
        <begin position="98"/>
        <end position="256"/>
    </location>
</feature>
<feature type="disulfide bond" evidence="3">
    <location>
        <begin position="142"/>
        <end position="210"/>
    </location>
</feature>
<feature type="disulfide bond" evidence="3">
    <location>
        <begin position="174"/>
        <end position="189"/>
    </location>
</feature>
<feature type="disulfide bond" evidence="3">
    <location>
        <begin position="200"/>
        <end position="225"/>
    </location>
</feature>
<sequence>MVLIRVLANLLILQLSYAQRSSELVIGGDECNINEHRFLVALYKSGRFRCGGTLINQEWVLTAAHCDRRNMEIKLGMHSKNVPNEDEQRRVPKEKFFCDSNKNHTQWNKDIMLIRLNSPVNNSTHIAPLSLPSNPPIVGSVCRIMGWGTITSPNETYPDVPHCANINLFNYTVCHGAHAGLPATSRTLCAGVLEEGKDTCKGDSGGPLICNGQFQGIVSWGGDPCAQPREPGVYTKVFDHLDWIQNIIAGNTTATCPL</sequence>
<comment type="function">
    <text evidence="1">Snake venom serine protease that may act in the hemostasis system of the prey.</text>
</comment>
<comment type="subunit">
    <text evidence="1">Monomer.</text>
</comment>
<comment type="subcellular location">
    <subcellularLocation>
        <location evidence="1">Secreted</location>
    </subcellularLocation>
</comment>
<comment type="tissue specificity">
    <text>Expressed by the venom gland.</text>
</comment>
<comment type="similarity">
    <text evidence="3">Belongs to the peptidase S1 family. Snake venom subfamily.</text>
</comment>
<keyword id="KW-1015">Disulfide bond</keyword>
<keyword id="KW-0325">Glycoprotein</keyword>
<keyword id="KW-1199">Hemostasis impairing toxin</keyword>
<keyword id="KW-0378">Hydrolase</keyword>
<keyword id="KW-0645">Protease</keyword>
<keyword id="KW-0964">Secreted</keyword>
<keyword id="KW-0720">Serine protease</keyword>
<keyword id="KW-0732">Signal</keyword>
<keyword id="KW-0800">Toxin</keyword>
<keyword id="KW-0865">Zymogen</keyword>